<dbReference type="EC" id="4.3.3.7" evidence="1"/>
<dbReference type="EMBL" id="CP000482">
    <property type="protein sequence ID" value="ABL00659.1"/>
    <property type="molecule type" value="Genomic_DNA"/>
</dbReference>
<dbReference type="RefSeq" id="WP_011736894.1">
    <property type="nucleotide sequence ID" value="NC_008609.1"/>
</dbReference>
<dbReference type="SMR" id="A1ATI8"/>
<dbReference type="STRING" id="338966.Ppro_3063"/>
<dbReference type="KEGG" id="ppd:Ppro_3063"/>
<dbReference type="eggNOG" id="COG0329">
    <property type="taxonomic scope" value="Bacteria"/>
</dbReference>
<dbReference type="HOGENOM" id="CLU_049343_7_1_7"/>
<dbReference type="OrthoDB" id="9782828at2"/>
<dbReference type="UniPathway" id="UPA00034">
    <property type="reaction ID" value="UER00017"/>
</dbReference>
<dbReference type="Proteomes" id="UP000006732">
    <property type="component" value="Chromosome"/>
</dbReference>
<dbReference type="GO" id="GO:0005829">
    <property type="term" value="C:cytosol"/>
    <property type="evidence" value="ECO:0007669"/>
    <property type="project" value="TreeGrafter"/>
</dbReference>
<dbReference type="GO" id="GO:0008840">
    <property type="term" value="F:4-hydroxy-tetrahydrodipicolinate synthase activity"/>
    <property type="evidence" value="ECO:0007669"/>
    <property type="project" value="UniProtKB-UniRule"/>
</dbReference>
<dbReference type="GO" id="GO:0019877">
    <property type="term" value="P:diaminopimelate biosynthetic process"/>
    <property type="evidence" value="ECO:0007669"/>
    <property type="project" value="UniProtKB-UniRule"/>
</dbReference>
<dbReference type="GO" id="GO:0009089">
    <property type="term" value="P:lysine biosynthetic process via diaminopimelate"/>
    <property type="evidence" value="ECO:0007669"/>
    <property type="project" value="UniProtKB-UniRule"/>
</dbReference>
<dbReference type="CDD" id="cd00950">
    <property type="entry name" value="DHDPS"/>
    <property type="match status" value="1"/>
</dbReference>
<dbReference type="Gene3D" id="3.20.20.70">
    <property type="entry name" value="Aldolase class I"/>
    <property type="match status" value="1"/>
</dbReference>
<dbReference type="HAMAP" id="MF_00418">
    <property type="entry name" value="DapA"/>
    <property type="match status" value="1"/>
</dbReference>
<dbReference type="InterPro" id="IPR013785">
    <property type="entry name" value="Aldolase_TIM"/>
</dbReference>
<dbReference type="InterPro" id="IPR005263">
    <property type="entry name" value="DapA"/>
</dbReference>
<dbReference type="InterPro" id="IPR002220">
    <property type="entry name" value="DapA-like"/>
</dbReference>
<dbReference type="InterPro" id="IPR020625">
    <property type="entry name" value="Schiff_base-form_aldolases_AS"/>
</dbReference>
<dbReference type="NCBIfam" id="TIGR00674">
    <property type="entry name" value="dapA"/>
    <property type="match status" value="1"/>
</dbReference>
<dbReference type="PANTHER" id="PTHR12128:SF66">
    <property type="entry name" value="4-HYDROXY-2-OXOGLUTARATE ALDOLASE, MITOCHONDRIAL"/>
    <property type="match status" value="1"/>
</dbReference>
<dbReference type="PANTHER" id="PTHR12128">
    <property type="entry name" value="DIHYDRODIPICOLINATE SYNTHASE"/>
    <property type="match status" value="1"/>
</dbReference>
<dbReference type="Pfam" id="PF00701">
    <property type="entry name" value="DHDPS"/>
    <property type="match status" value="1"/>
</dbReference>
<dbReference type="PIRSF" id="PIRSF001365">
    <property type="entry name" value="DHDPS"/>
    <property type="match status" value="1"/>
</dbReference>
<dbReference type="PRINTS" id="PR00146">
    <property type="entry name" value="DHPICSNTHASE"/>
</dbReference>
<dbReference type="SMART" id="SM01130">
    <property type="entry name" value="DHDPS"/>
    <property type="match status" value="1"/>
</dbReference>
<dbReference type="SUPFAM" id="SSF51569">
    <property type="entry name" value="Aldolase"/>
    <property type="match status" value="1"/>
</dbReference>
<dbReference type="PROSITE" id="PS00666">
    <property type="entry name" value="DHDPS_2"/>
    <property type="match status" value="1"/>
</dbReference>
<accession>A1ATI8</accession>
<comment type="function">
    <text evidence="1">Catalyzes the condensation of (S)-aspartate-beta-semialdehyde [(S)-ASA] and pyruvate to 4-hydroxy-tetrahydrodipicolinate (HTPA).</text>
</comment>
<comment type="catalytic activity">
    <reaction evidence="1">
        <text>L-aspartate 4-semialdehyde + pyruvate = (2S,4S)-4-hydroxy-2,3,4,5-tetrahydrodipicolinate + H2O + H(+)</text>
        <dbReference type="Rhea" id="RHEA:34171"/>
        <dbReference type="ChEBI" id="CHEBI:15361"/>
        <dbReference type="ChEBI" id="CHEBI:15377"/>
        <dbReference type="ChEBI" id="CHEBI:15378"/>
        <dbReference type="ChEBI" id="CHEBI:67139"/>
        <dbReference type="ChEBI" id="CHEBI:537519"/>
        <dbReference type="EC" id="4.3.3.7"/>
    </reaction>
</comment>
<comment type="pathway">
    <text evidence="1">Amino-acid biosynthesis; L-lysine biosynthesis via DAP pathway; (S)-tetrahydrodipicolinate from L-aspartate: step 3/4.</text>
</comment>
<comment type="subunit">
    <text evidence="1">Homotetramer; dimer of dimers.</text>
</comment>
<comment type="subcellular location">
    <subcellularLocation>
        <location evidence="1">Cytoplasm</location>
    </subcellularLocation>
</comment>
<comment type="similarity">
    <text evidence="1">Belongs to the DapA family.</text>
</comment>
<comment type="caution">
    <text evidence="2">Was originally thought to be a dihydrodipicolinate synthase (DHDPS), catalyzing the condensation of (S)-aspartate-beta-semialdehyde [(S)-ASA] and pyruvate to dihydrodipicolinate (DHDP). However, it was shown in E.coli that the product of the enzymatic reaction is not dihydrodipicolinate but in fact (4S)-4-hydroxy-2,3,4,5-tetrahydro-(2S)-dipicolinic acid (HTPA), and that the consecutive dehydration reaction leading to DHDP is not spontaneous but catalyzed by DapB.</text>
</comment>
<gene>
    <name evidence="1" type="primary">dapA</name>
    <name type="ordered locus">Ppro_3063</name>
</gene>
<keyword id="KW-0028">Amino-acid biosynthesis</keyword>
<keyword id="KW-0963">Cytoplasm</keyword>
<keyword id="KW-0220">Diaminopimelate biosynthesis</keyword>
<keyword id="KW-0456">Lyase</keyword>
<keyword id="KW-0457">Lysine biosynthesis</keyword>
<keyword id="KW-1185">Reference proteome</keyword>
<keyword id="KW-0704">Schiff base</keyword>
<evidence type="ECO:0000255" key="1">
    <source>
        <dbReference type="HAMAP-Rule" id="MF_00418"/>
    </source>
</evidence>
<evidence type="ECO:0000305" key="2"/>
<name>DAPA_PELPD</name>
<organism>
    <name type="scientific">Pelobacter propionicus (strain DSM 2379 / NBRC 103807 / OttBd1)</name>
    <dbReference type="NCBI Taxonomy" id="338966"/>
    <lineage>
        <taxon>Bacteria</taxon>
        <taxon>Pseudomonadati</taxon>
        <taxon>Thermodesulfobacteriota</taxon>
        <taxon>Desulfuromonadia</taxon>
        <taxon>Desulfuromonadales</taxon>
        <taxon>Desulfuromonadaceae</taxon>
        <taxon>Pelobacter</taxon>
    </lineage>
</organism>
<feature type="chain" id="PRO_1000050238" description="4-hydroxy-tetrahydrodipicolinate synthase">
    <location>
        <begin position="1"/>
        <end position="290"/>
    </location>
</feature>
<feature type="active site" description="Proton donor/acceptor" evidence="1">
    <location>
        <position position="132"/>
    </location>
</feature>
<feature type="active site" description="Schiff-base intermediate with substrate" evidence="1">
    <location>
        <position position="160"/>
    </location>
</feature>
<feature type="binding site" evidence="1">
    <location>
        <position position="44"/>
    </location>
    <ligand>
        <name>pyruvate</name>
        <dbReference type="ChEBI" id="CHEBI:15361"/>
    </ligand>
</feature>
<feature type="binding site" evidence="1">
    <location>
        <position position="202"/>
    </location>
    <ligand>
        <name>pyruvate</name>
        <dbReference type="ChEBI" id="CHEBI:15361"/>
    </ligand>
</feature>
<feature type="site" description="Part of a proton relay during catalysis" evidence="1">
    <location>
        <position position="43"/>
    </location>
</feature>
<feature type="site" description="Part of a proton relay during catalysis" evidence="1">
    <location>
        <position position="106"/>
    </location>
</feature>
<sequence length="290" mass="31253">MFKGSIVALVTPFRDGAVDEETLRRMVDYQIENGTDGISPCGTTGEASTLDYDEHMRVIEIVIQQVNGRVPVIAGTGSNSTTEAIELSRKAKKLGADGVLLVSPYYNKPSQEGLYRHFRAIADAVDIPQVLYNVPGRTGVNMLPQTVARLAEHDSIVAIKEATGSLQQASELMEMCGDKIDVISGDDFITFPMMACGATGVISVVANIMPREVARLVDAFYEGDMDEARRLHLSLLNISNAMFIETNPVPVKTAAALMGLCAEELRLPLAPLGDASRATLCAVMKSYGLI</sequence>
<protein>
    <recommendedName>
        <fullName evidence="1">4-hydroxy-tetrahydrodipicolinate synthase</fullName>
        <shortName evidence="1">HTPA synthase</shortName>
        <ecNumber evidence="1">4.3.3.7</ecNumber>
    </recommendedName>
</protein>
<reference key="1">
    <citation type="submission" date="2006-10" db="EMBL/GenBank/DDBJ databases">
        <title>Complete sequence of chromosome of Pelobacter propionicus DSM 2379.</title>
        <authorList>
            <consortium name="US DOE Joint Genome Institute"/>
            <person name="Copeland A."/>
            <person name="Lucas S."/>
            <person name="Lapidus A."/>
            <person name="Barry K."/>
            <person name="Detter J.C."/>
            <person name="Glavina del Rio T."/>
            <person name="Hammon N."/>
            <person name="Israni S."/>
            <person name="Dalin E."/>
            <person name="Tice H."/>
            <person name="Pitluck S."/>
            <person name="Saunders E."/>
            <person name="Brettin T."/>
            <person name="Bruce D."/>
            <person name="Han C."/>
            <person name="Tapia R."/>
            <person name="Schmutz J."/>
            <person name="Larimer F."/>
            <person name="Land M."/>
            <person name="Hauser L."/>
            <person name="Kyrpides N."/>
            <person name="Kim E."/>
            <person name="Lovley D."/>
            <person name="Richardson P."/>
        </authorList>
    </citation>
    <scope>NUCLEOTIDE SEQUENCE [LARGE SCALE GENOMIC DNA]</scope>
    <source>
        <strain>DSM 2379 / NBRC 103807 / OttBd1</strain>
    </source>
</reference>
<proteinExistence type="inferred from homology"/>